<accession>Q4JX93</accession>
<keyword id="KW-0067">ATP-binding</keyword>
<keyword id="KW-0378">Hydrolase</keyword>
<keyword id="KW-0547">Nucleotide-binding</keyword>
<keyword id="KW-1185">Reference proteome</keyword>
<evidence type="ECO:0000255" key="1">
    <source>
        <dbReference type="HAMAP-Rule" id="MF_00691"/>
    </source>
</evidence>
<comment type="function">
    <text evidence="1">Catalyzes the cleavage of 5-oxoproline to form L-glutamate coupled to the hydrolysis of ATP to ADP and inorganic phosphate.</text>
</comment>
<comment type="catalytic activity">
    <reaction evidence="1">
        <text>5-oxo-L-proline + ATP + 2 H2O = L-glutamate + ADP + phosphate + H(+)</text>
        <dbReference type="Rhea" id="RHEA:10348"/>
        <dbReference type="ChEBI" id="CHEBI:15377"/>
        <dbReference type="ChEBI" id="CHEBI:15378"/>
        <dbReference type="ChEBI" id="CHEBI:29985"/>
        <dbReference type="ChEBI" id="CHEBI:30616"/>
        <dbReference type="ChEBI" id="CHEBI:43474"/>
        <dbReference type="ChEBI" id="CHEBI:58402"/>
        <dbReference type="ChEBI" id="CHEBI:456216"/>
        <dbReference type="EC" id="3.5.2.9"/>
    </reaction>
</comment>
<comment type="subunit">
    <text evidence="1">Forms a complex composed of PxpA, PxpB and PxpC.</text>
</comment>
<comment type="similarity">
    <text evidence="1">Belongs to the LamB/PxpA family.</text>
</comment>
<reference key="1">
    <citation type="journal article" date="2005" name="J. Bacteriol.">
        <title>Complete genome sequence and analysis of the multiresistant nosocomial pathogen Corynebacterium jeikeium K411, a lipid-requiring bacterium of the human skin flora.</title>
        <authorList>
            <person name="Tauch A."/>
            <person name="Kaiser O."/>
            <person name="Hain T."/>
            <person name="Goesmann A."/>
            <person name="Weisshaar B."/>
            <person name="Albersmeier A."/>
            <person name="Bekel T."/>
            <person name="Bischoff N."/>
            <person name="Brune I."/>
            <person name="Chakraborty T."/>
            <person name="Kalinowski J."/>
            <person name="Meyer F."/>
            <person name="Rupp O."/>
            <person name="Schneiker S."/>
            <person name="Viehoever P."/>
            <person name="Puehler A."/>
        </authorList>
    </citation>
    <scope>NUCLEOTIDE SEQUENCE [LARGE SCALE GENOMIC DNA]</scope>
    <source>
        <strain>K411</strain>
    </source>
</reference>
<protein>
    <recommendedName>
        <fullName evidence="1">5-oxoprolinase subunit A</fullName>
        <shortName evidence="1">5-OPase subunit A</shortName>
        <ecNumber evidence="1">3.5.2.9</ecNumber>
    </recommendedName>
    <alternativeName>
        <fullName evidence="1">5-oxoprolinase (ATP-hydrolyzing) subunit A</fullName>
    </alternativeName>
</protein>
<name>PXPA_CORJK</name>
<dbReference type="EC" id="3.5.2.9" evidence="1"/>
<dbReference type="EMBL" id="CR931997">
    <property type="protein sequence ID" value="CAI36564.1"/>
    <property type="molecule type" value="Genomic_DNA"/>
</dbReference>
<dbReference type="RefSeq" id="WP_005294467.1">
    <property type="nucleotide sequence ID" value="NC_007164.1"/>
</dbReference>
<dbReference type="SMR" id="Q4JX93"/>
<dbReference type="STRING" id="306537.jk0407"/>
<dbReference type="GeneID" id="92737898"/>
<dbReference type="KEGG" id="cjk:jk0407"/>
<dbReference type="eggNOG" id="COG1540">
    <property type="taxonomic scope" value="Bacteria"/>
</dbReference>
<dbReference type="HOGENOM" id="CLU_069535_0_0_11"/>
<dbReference type="OrthoDB" id="9773478at2"/>
<dbReference type="Proteomes" id="UP000000545">
    <property type="component" value="Chromosome"/>
</dbReference>
<dbReference type="GO" id="GO:0017168">
    <property type="term" value="F:5-oxoprolinase (ATP-hydrolyzing) activity"/>
    <property type="evidence" value="ECO:0007669"/>
    <property type="project" value="UniProtKB-UniRule"/>
</dbReference>
<dbReference type="GO" id="GO:0005524">
    <property type="term" value="F:ATP binding"/>
    <property type="evidence" value="ECO:0007669"/>
    <property type="project" value="UniProtKB-UniRule"/>
</dbReference>
<dbReference type="GO" id="GO:0005975">
    <property type="term" value="P:carbohydrate metabolic process"/>
    <property type="evidence" value="ECO:0007669"/>
    <property type="project" value="InterPro"/>
</dbReference>
<dbReference type="CDD" id="cd10787">
    <property type="entry name" value="LamB_YcsF_like"/>
    <property type="match status" value="1"/>
</dbReference>
<dbReference type="Gene3D" id="3.20.20.370">
    <property type="entry name" value="Glycoside hydrolase/deacetylase"/>
    <property type="match status" value="1"/>
</dbReference>
<dbReference type="HAMAP" id="MF_00691">
    <property type="entry name" value="PxpA"/>
    <property type="match status" value="1"/>
</dbReference>
<dbReference type="InterPro" id="IPR011330">
    <property type="entry name" value="Glyco_hydro/deAcase_b/a-brl"/>
</dbReference>
<dbReference type="InterPro" id="IPR005501">
    <property type="entry name" value="LamB/YcsF/PxpA-like"/>
</dbReference>
<dbReference type="NCBIfam" id="NF003814">
    <property type="entry name" value="PRK05406.1-3"/>
    <property type="match status" value="1"/>
</dbReference>
<dbReference type="NCBIfam" id="NF003816">
    <property type="entry name" value="PRK05406.1-5"/>
    <property type="match status" value="1"/>
</dbReference>
<dbReference type="PANTHER" id="PTHR30292:SF0">
    <property type="entry name" value="5-OXOPROLINASE SUBUNIT A"/>
    <property type="match status" value="1"/>
</dbReference>
<dbReference type="PANTHER" id="PTHR30292">
    <property type="entry name" value="UNCHARACTERIZED PROTEIN YBGL-RELATED"/>
    <property type="match status" value="1"/>
</dbReference>
<dbReference type="Pfam" id="PF03746">
    <property type="entry name" value="LamB_YcsF"/>
    <property type="match status" value="1"/>
</dbReference>
<dbReference type="SUPFAM" id="SSF88713">
    <property type="entry name" value="Glycoside hydrolase/deacetylase"/>
    <property type="match status" value="1"/>
</dbReference>
<organism>
    <name type="scientific">Corynebacterium jeikeium (strain K411)</name>
    <dbReference type="NCBI Taxonomy" id="306537"/>
    <lineage>
        <taxon>Bacteria</taxon>
        <taxon>Bacillati</taxon>
        <taxon>Actinomycetota</taxon>
        <taxon>Actinomycetes</taxon>
        <taxon>Mycobacteriales</taxon>
        <taxon>Corynebacteriaceae</taxon>
        <taxon>Corynebacterium</taxon>
    </lineage>
</organism>
<feature type="chain" id="PRO_0000185005" description="5-oxoprolinase subunit A">
    <location>
        <begin position="1"/>
        <end position="258"/>
    </location>
</feature>
<gene>
    <name evidence="1" type="primary">pxpA</name>
    <name type="ordered locus">jk0407</name>
</gene>
<sequence length="258" mass="26903">MSTTRSSLSIDLNADLGETTGGNPVSDDAAMVAIVSSANVACGFHAGDAHAISNTLAAAAENNVTVGAHVGYNDQAGFGRRFIDYSPAELADEVLYQIGALDALAKARGTQVRYVKPHGAMYNTIVHHEAQAKAVIEGIKAFGADLPVMLLPGAVAADYAEKAGLRVINEVFADRAYNPDGTLVSRRENGAVLHDPEVVARRVVRMAEEGTIEAIDGSTIRTTADSVCVHGDSPGAVAMAERIAAELQSNNITIGSFL</sequence>
<proteinExistence type="inferred from homology"/>